<gene>
    <name type="primary">dph5</name>
    <name type="ORF">AN0720</name>
</gene>
<comment type="function">
    <text evidence="2">S-adenosyl-L-methionine-dependent methyltransferase that catalyzes four methylations of the modified target histidine residue in translation elongation factor 2 (EF-2), to form an intermediate called diphthine methyl ester. The four successive methylation reactions represent the second step of diphthamide biosynthesis.</text>
</comment>
<comment type="catalytic activity">
    <reaction evidence="2">
        <text>2-[(3S)-amino-3-carboxypropyl]-L-histidyl-[translation elongation factor 2] + 4 S-adenosyl-L-methionine = diphthine methyl ester-[translation elongation factor 2] + 4 S-adenosyl-L-homocysteine + 3 H(+)</text>
        <dbReference type="Rhea" id="RHEA:42652"/>
        <dbReference type="Rhea" id="RHEA-COMP:9749"/>
        <dbReference type="Rhea" id="RHEA-COMP:10173"/>
        <dbReference type="ChEBI" id="CHEBI:15378"/>
        <dbReference type="ChEBI" id="CHEBI:57856"/>
        <dbReference type="ChEBI" id="CHEBI:59789"/>
        <dbReference type="ChEBI" id="CHEBI:73995"/>
        <dbReference type="ChEBI" id="CHEBI:79005"/>
        <dbReference type="EC" id="2.1.1.314"/>
    </reaction>
</comment>
<comment type="pathway">
    <text>Protein modification; peptidyl-diphthamide biosynthesis.</text>
</comment>
<comment type="subcellular location">
    <subcellularLocation>
        <location evidence="1">Cytoplasm</location>
    </subcellularLocation>
</comment>
<comment type="similarity">
    <text evidence="3">Belongs to the diphthine synthase family.</text>
</comment>
<comment type="sequence caution" evidence="3">
    <conflict type="erroneous gene model prediction">
        <sequence resource="EMBL-CDS" id="EAA65197"/>
    </conflict>
</comment>
<proteinExistence type="inferred from homology"/>
<dbReference type="EC" id="2.1.1.314"/>
<dbReference type="EMBL" id="AACD01000011">
    <property type="protein sequence ID" value="EAA65197.1"/>
    <property type="status" value="ALT_SEQ"/>
    <property type="molecule type" value="Genomic_DNA"/>
</dbReference>
<dbReference type="EMBL" id="BN001308">
    <property type="protein sequence ID" value="CBF88920.1"/>
    <property type="molecule type" value="Genomic_DNA"/>
</dbReference>
<dbReference type="RefSeq" id="XP_658324.1">
    <property type="nucleotide sequence ID" value="XM_653232.1"/>
</dbReference>
<dbReference type="SMR" id="Q5BFG0"/>
<dbReference type="FunCoup" id="Q5BFG0">
    <property type="interactions" value="919"/>
</dbReference>
<dbReference type="STRING" id="227321.Q5BFG0"/>
<dbReference type="EnsemblFungi" id="CBF88920">
    <property type="protein sequence ID" value="CBF88920"/>
    <property type="gene ID" value="ANIA_00720"/>
</dbReference>
<dbReference type="VEuPathDB" id="FungiDB:AN0720"/>
<dbReference type="eggNOG" id="KOG3123">
    <property type="taxonomic scope" value="Eukaryota"/>
</dbReference>
<dbReference type="HOGENOM" id="CLU_066040_1_0_1"/>
<dbReference type="InParanoid" id="Q5BFG0"/>
<dbReference type="OMA" id="HNASIMS"/>
<dbReference type="OrthoDB" id="2516at2759"/>
<dbReference type="UniPathway" id="UPA00559"/>
<dbReference type="Proteomes" id="UP000000560">
    <property type="component" value="Chromosome VIII"/>
</dbReference>
<dbReference type="GO" id="GO:0005737">
    <property type="term" value="C:cytoplasm"/>
    <property type="evidence" value="ECO:0007669"/>
    <property type="project" value="UniProtKB-SubCell"/>
</dbReference>
<dbReference type="GO" id="GO:0141133">
    <property type="term" value="F:diphthine methyl ester synthase activity"/>
    <property type="evidence" value="ECO:0007669"/>
    <property type="project" value="UniProtKB-EC"/>
</dbReference>
<dbReference type="GO" id="GO:0032259">
    <property type="term" value="P:methylation"/>
    <property type="evidence" value="ECO:0007669"/>
    <property type="project" value="UniProtKB-KW"/>
</dbReference>
<dbReference type="GO" id="GO:0017183">
    <property type="term" value="P:protein histidyl modification to diphthamide"/>
    <property type="evidence" value="ECO:0000250"/>
    <property type="project" value="UniProtKB"/>
</dbReference>
<dbReference type="CDD" id="cd11647">
    <property type="entry name" value="DHP5_DphB"/>
    <property type="match status" value="1"/>
</dbReference>
<dbReference type="FunFam" id="3.30.950.10:FF:000004">
    <property type="entry name" value="Diphthine synthase putative"/>
    <property type="match status" value="1"/>
</dbReference>
<dbReference type="FunFam" id="3.40.1010.10:FF:000004">
    <property type="entry name" value="Putative diphthine synthase"/>
    <property type="match status" value="1"/>
</dbReference>
<dbReference type="Gene3D" id="3.40.1010.10">
    <property type="entry name" value="Cobalt-precorrin-4 Transmethylase, Domain 1"/>
    <property type="match status" value="1"/>
</dbReference>
<dbReference type="Gene3D" id="3.30.950.10">
    <property type="entry name" value="Methyltransferase, Cobalt-precorrin-4 Transmethylase, Domain 2"/>
    <property type="match status" value="1"/>
</dbReference>
<dbReference type="HAMAP" id="MF_01084">
    <property type="entry name" value="Diphthine_synth"/>
    <property type="match status" value="1"/>
</dbReference>
<dbReference type="InterPro" id="IPR000878">
    <property type="entry name" value="4pyrrol_Mease"/>
</dbReference>
<dbReference type="InterPro" id="IPR035996">
    <property type="entry name" value="4pyrrol_Methylase_sf"/>
</dbReference>
<dbReference type="InterPro" id="IPR014777">
    <property type="entry name" value="4pyrrole_Mease_sub1"/>
</dbReference>
<dbReference type="InterPro" id="IPR014776">
    <property type="entry name" value="4pyrrole_Mease_sub2"/>
</dbReference>
<dbReference type="InterPro" id="IPR004551">
    <property type="entry name" value="Dphthn_synthase"/>
</dbReference>
<dbReference type="NCBIfam" id="TIGR00522">
    <property type="entry name" value="dph5"/>
    <property type="match status" value="1"/>
</dbReference>
<dbReference type="PANTHER" id="PTHR10882:SF0">
    <property type="entry name" value="DIPHTHINE METHYL ESTER SYNTHASE"/>
    <property type="match status" value="1"/>
</dbReference>
<dbReference type="PANTHER" id="PTHR10882">
    <property type="entry name" value="DIPHTHINE SYNTHASE"/>
    <property type="match status" value="1"/>
</dbReference>
<dbReference type="Pfam" id="PF00590">
    <property type="entry name" value="TP_methylase"/>
    <property type="match status" value="1"/>
</dbReference>
<dbReference type="PIRSF" id="PIRSF036432">
    <property type="entry name" value="Diphthine_synth"/>
    <property type="match status" value="1"/>
</dbReference>
<dbReference type="SUPFAM" id="SSF53790">
    <property type="entry name" value="Tetrapyrrole methylase"/>
    <property type="match status" value="1"/>
</dbReference>
<evidence type="ECO:0000250" key="1"/>
<evidence type="ECO:0000250" key="2">
    <source>
        <dbReference type="UniProtKB" id="P32469"/>
    </source>
</evidence>
<evidence type="ECO:0000305" key="3"/>
<feature type="chain" id="PRO_0000156141" description="Diphthine methyl ester synthase">
    <location>
        <begin position="1"/>
        <end position="285"/>
    </location>
</feature>
<feature type="binding site" evidence="1">
    <location>
        <position position="9"/>
    </location>
    <ligand>
        <name>S-adenosyl-L-methionine</name>
        <dbReference type="ChEBI" id="CHEBI:59789"/>
    </ligand>
</feature>
<feature type="binding site" evidence="1">
    <location>
        <position position="84"/>
    </location>
    <ligand>
        <name>S-adenosyl-L-methionine</name>
        <dbReference type="ChEBI" id="CHEBI:59789"/>
    </ligand>
</feature>
<feature type="binding site" evidence="1">
    <location>
        <position position="87"/>
    </location>
    <ligand>
        <name>S-adenosyl-L-methionine</name>
        <dbReference type="ChEBI" id="CHEBI:59789"/>
    </ligand>
</feature>
<feature type="binding site" evidence="1">
    <location>
        <begin position="112"/>
        <end position="113"/>
    </location>
    <ligand>
        <name>S-adenosyl-L-methionine</name>
        <dbReference type="ChEBI" id="CHEBI:59789"/>
    </ligand>
</feature>
<feature type="binding site" evidence="1">
    <location>
        <position position="163"/>
    </location>
    <ligand>
        <name>S-adenosyl-L-methionine</name>
        <dbReference type="ChEBI" id="CHEBI:59789"/>
    </ligand>
</feature>
<feature type="binding site" evidence="1">
    <location>
        <position position="221"/>
    </location>
    <ligand>
        <name>S-adenosyl-L-methionine</name>
        <dbReference type="ChEBI" id="CHEBI:59789"/>
    </ligand>
</feature>
<feature type="binding site" evidence="1">
    <location>
        <position position="246"/>
    </location>
    <ligand>
        <name>S-adenosyl-L-methionine</name>
        <dbReference type="ChEBI" id="CHEBI:59789"/>
    </ligand>
</feature>
<name>DPH5_EMENI</name>
<sequence length="285" mass="31602">MLYLVGLGLADERDITVRGLEVVKKAERVYLEAYTAILLVDKAKLEAFYGRPVIEADRELVETGSDDILANADKVDVAFLVVGDPFGATTHTDLVLRARELGIESKVIPNASIMSGIGCTGLQLYNFGQTVSMVFFTETWKPSSYYDRVKENVQIGLHTLVLLDIKVKEQSLENMARGRLIYEPPRFMTVAQCAAQMLETEEERQEGVWGPDSLAVGAARVGAEDQKLVAGTLQELTQVDMGRPLHSLVLLGRRAHDLEKDYIRRFAVDEATFDAAWQNGKYGSS</sequence>
<accession>Q5BFG0</accession>
<accession>C8VRB9</accession>
<organism>
    <name type="scientific">Emericella nidulans (strain FGSC A4 / ATCC 38163 / CBS 112.46 / NRRL 194 / M139)</name>
    <name type="common">Aspergillus nidulans</name>
    <dbReference type="NCBI Taxonomy" id="227321"/>
    <lineage>
        <taxon>Eukaryota</taxon>
        <taxon>Fungi</taxon>
        <taxon>Dikarya</taxon>
        <taxon>Ascomycota</taxon>
        <taxon>Pezizomycotina</taxon>
        <taxon>Eurotiomycetes</taxon>
        <taxon>Eurotiomycetidae</taxon>
        <taxon>Eurotiales</taxon>
        <taxon>Aspergillaceae</taxon>
        <taxon>Aspergillus</taxon>
        <taxon>Aspergillus subgen. Nidulantes</taxon>
    </lineage>
</organism>
<keyword id="KW-0963">Cytoplasm</keyword>
<keyword id="KW-0489">Methyltransferase</keyword>
<keyword id="KW-1185">Reference proteome</keyword>
<keyword id="KW-0949">S-adenosyl-L-methionine</keyword>
<keyword id="KW-0808">Transferase</keyword>
<reference key="1">
    <citation type="journal article" date="2005" name="Nature">
        <title>Sequencing of Aspergillus nidulans and comparative analysis with A. fumigatus and A. oryzae.</title>
        <authorList>
            <person name="Galagan J.E."/>
            <person name="Calvo S.E."/>
            <person name="Cuomo C."/>
            <person name="Ma L.-J."/>
            <person name="Wortman J.R."/>
            <person name="Batzoglou S."/>
            <person name="Lee S.-I."/>
            <person name="Bastuerkmen M."/>
            <person name="Spevak C.C."/>
            <person name="Clutterbuck J."/>
            <person name="Kapitonov V."/>
            <person name="Jurka J."/>
            <person name="Scazzocchio C."/>
            <person name="Farman M.L."/>
            <person name="Butler J."/>
            <person name="Purcell S."/>
            <person name="Harris S."/>
            <person name="Braus G.H."/>
            <person name="Draht O."/>
            <person name="Busch S."/>
            <person name="D'Enfert C."/>
            <person name="Bouchier C."/>
            <person name="Goldman G.H."/>
            <person name="Bell-Pedersen D."/>
            <person name="Griffiths-Jones S."/>
            <person name="Doonan J.H."/>
            <person name="Yu J."/>
            <person name="Vienken K."/>
            <person name="Pain A."/>
            <person name="Freitag M."/>
            <person name="Selker E.U."/>
            <person name="Archer D.B."/>
            <person name="Penalva M.A."/>
            <person name="Oakley B.R."/>
            <person name="Momany M."/>
            <person name="Tanaka T."/>
            <person name="Kumagai T."/>
            <person name="Asai K."/>
            <person name="Machida M."/>
            <person name="Nierman W.C."/>
            <person name="Denning D.W."/>
            <person name="Caddick M.X."/>
            <person name="Hynes M."/>
            <person name="Paoletti M."/>
            <person name="Fischer R."/>
            <person name="Miller B.L."/>
            <person name="Dyer P.S."/>
            <person name="Sachs M.S."/>
            <person name="Osmani S.A."/>
            <person name="Birren B.W."/>
        </authorList>
    </citation>
    <scope>NUCLEOTIDE SEQUENCE [LARGE SCALE GENOMIC DNA]</scope>
    <source>
        <strain>FGSC A4 / ATCC 38163 / CBS 112.46 / NRRL 194 / M139</strain>
    </source>
</reference>
<reference key="2">
    <citation type="journal article" date="2009" name="Fungal Genet. Biol.">
        <title>The 2008 update of the Aspergillus nidulans genome annotation: a community effort.</title>
        <authorList>
            <person name="Wortman J.R."/>
            <person name="Gilsenan J.M."/>
            <person name="Joardar V."/>
            <person name="Deegan J."/>
            <person name="Clutterbuck J."/>
            <person name="Andersen M.R."/>
            <person name="Archer D."/>
            <person name="Bencina M."/>
            <person name="Braus G."/>
            <person name="Coutinho P."/>
            <person name="von Dohren H."/>
            <person name="Doonan J."/>
            <person name="Driessen A.J."/>
            <person name="Durek P."/>
            <person name="Espeso E."/>
            <person name="Fekete E."/>
            <person name="Flipphi M."/>
            <person name="Estrada C.G."/>
            <person name="Geysens S."/>
            <person name="Goldman G."/>
            <person name="de Groot P.W."/>
            <person name="Hansen K."/>
            <person name="Harris S.D."/>
            <person name="Heinekamp T."/>
            <person name="Helmstaedt K."/>
            <person name="Henrissat B."/>
            <person name="Hofmann G."/>
            <person name="Homan T."/>
            <person name="Horio T."/>
            <person name="Horiuchi H."/>
            <person name="James S."/>
            <person name="Jones M."/>
            <person name="Karaffa L."/>
            <person name="Karanyi Z."/>
            <person name="Kato M."/>
            <person name="Keller N."/>
            <person name="Kelly D.E."/>
            <person name="Kiel J.A."/>
            <person name="Kim J.M."/>
            <person name="van der Klei I.J."/>
            <person name="Klis F.M."/>
            <person name="Kovalchuk A."/>
            <person name="Krasevec N."/>
            <person name="Kubicek C.P."/>
            <person name="Liu B."/>
            <person name="Maccabe A."/>
            <person name="Meyer V."/>
            <person name="Mirabito P."/>
            <person name="Miskei M."/>
            <person name="Mos M."/>
            <person name="Mullins J."/>
            <person name="Nelson D.R."/>
            <person name="Nielsen J."/>
            <person name="Oakley B.R."/>
            <person name="Osmani S.A."/>
            <person name="Pakula T."/>
            <person name="Paszewski A."/>
            <person name="Paulsen I."/>
            <person name="Pilsyk S."/>
            <person name="Pocsi I."/>
            <person name="Punt P.J."/>
            <person name="Ram A.F."/>
            <person name="Ren Q."/>
            <person name="Robellet X."/>
            <person name="Robson G."/>
            <person name="Seiboth B."/>
            <person name="van Solingen P."/>
            <person name="Specht T."/>
            <person name="Sun J."/>
            <person name="Taheri-Talesh N."/>
            <person name="Takeshita N."/>
            <person name="Ussery D."/>
            <person name="vanKuyk P.A."/>
            <person name="Visser H."/>
            <person name="van de Vondervoort P.J."/>
            <person name="de Vries R.P."/>
            <person name="Walton J."/>
            <person name="Xiang X."/>
            <person name="Xiong Y."/>
            <person name="Zeng A.P."/>
            <person name="Brandt B.W."/>
            <person name="Cornell M.J."/>
            <person name="van den Hondel C.A."/>
            <person name="Visser J."/>
            <person name="Oliver S.G."/>
            <person name="Turner G."/>
        </authorList>
    </citation>
    <scope>GENOME REANNOTATION</scope>
    <source>
        <strain>FGSC A4 / ATCC 38163 / CBS 112.46 / NRRL 194 / M139</strain>
    </source>
</reference>
<protein>
    <recommendedName>
        <fullName>Diphthine methyl ester synthase</fullName>
        <ecNumber>2.1.1.314</ecNumber>
    </recommendedName>
    <alternativeName>
        <fullName>Diphthamide biosynthesis methyltransferase</fullName>
    </alternativeName>
</protein>